<evidence type="ECO:0000255" key="1">
    <source>
        <dbReference type="HAMAP-Rule" id="MF_00259"/>
    </source>
</evidence>
<gene>
    <name evidence="1" type="primary">gcvT</name>
    <name type="ordered locus">SAUSA300_1498</name>
</gene>
<sequence>MSSDLKQTPLYQNYVDRGAKIVEFGGWAMPVQFSSIKEEHNAVRYEIGLFDVSHMGEIEVTGKDASQFVQYLLSNDTDNLTTSKALYTALCNEEGGIIDDLVIYKLADDNYLLVVNAANTEKDFNWILKHKEKFDVEVQNVSNQYGQLAIQGPKARDLINQLVDEDVTEMKMFEFKQGVKLFGANVILSQSGYTGEDGFEIYCNIDDTEKIWDGLLEYNVMPCGLGARDTLRLEAGLPLHGQDLTESITPYEGGIAFASKPLIDADFIGKSVLKDQKENGAPRRTVGLELLEKGIARTGYEVMDLDGNIIGEVTSGTQSPSSGKSIALAMIKRDEFEMGRELLVQVRKRQLKAKIVKKNQIDK</sequence>
<dbReference type="EC" id="2.1.2.10" evidence="1"/>
<dbReference type="EMBL" id="CP000255">
    <property type="protein sequence ID" value="ABD20675.1"/>
    <property type="molecule type" value="Genomic_DNA"/>
</dbReference>
<dbReference type="RefSeq" id="WP_000093349.1">
    <property type="nucleotide sequence ID" value="NZ_CP027476.1"/>
</dbReference>
<dbReference type="SMR" id="Q2FGI5"/>
<dbReference type="KEGG" id="saa:SAUSA300_1498"/>
<dbReference type="HOGENOM" id="CLU_007884_10_2_9"/>
<dbReference type="OMA" id="MPVQYPA"/>
<dbReference type="Proteomes" id="UP000001939">
    <property type="component" value="Chromosome"/>
</dbReference>
<dbReference type="GO" id="GO:0005829">
    <property type="term" value="C:cytosol"/>
    <property type="evidence" value="ECO:0007669"/>
    <property type="project" value="TreeGrafter"/>
</dbReference>
<dbReference type="GO" id="GO:0005960">
    <property type="term" value="C:glycine cleavage complex"/>
    <property type="evidence" value="ECO:0007669"/>
    <property type="project" value="InterPro"/>
</dbReference>
<dbReference type="GO" id="GO:0004047">
    <property type="term" value="F:aminomethyltransferase activity"/>
    <property type="evidence" value="ECO:0007669"/>
    <property type="project" value="UniProtKB-UniRule"/>
</dbReference>
<dbReference type="GO" id="GO:0008483">
    <property type="term" value="F:transaminase activity"/>
    <property type="evidence" value="ECO:0007669"/>
    <property type="project" value="UniProtKB-KW"/>
</dbReference>
<dbReference type="GO" id="GO:0019464">
    <property type="term" value="P:glycine decarboxylation via glycine cleavage system"/>
    <property type="evidence" value="ECO:0007669"/>
    <property type="project" value="UniProtKB-UniRule"/>
</dbReference>
<dbReference type="FunFam" id="2.40.30.110:FF:000007">
    <property type="entry name" value="Aminomethyltransferase"/>
    <property type="match status" value="1"/>
</dbReference>
<dbReference type="FunFam" id="3.30.70.1400:FF:000001">
    <property type="entry name" value="Aminomethyltransferase"/>
    <property type="match status" value="1"/>
</dbReference>
<dbReference type="FunFam" id="4.10.1250.10:FF:000001">
    <property type="entry name" value="Aminomethyltransferase"/>
    <property type="match status" value="1"/>
</dbReference>
<dbReference type="Gene3D" id="2.40.30.110">
    <property type="entry name" value="Aminomethyltransferase beta-barrel domains"/>
    <property type="match status" value="1"/>
</dbReference>
<dbReference type="Gene3D" id="3.30.70.1400">
    <property type="entry name" value="Aminomethyltransferase beta-barrel domains"/>
    <property type="match status" value="1"/>
</dbReference>
<dbReference type="Gene3D" id="4.10.1250.10">
    <property type="entry name" value="Aminomethyltransferase fragment"/>
    <property type="match status" value="1"/>
</dbReference>
<dbReference type="Gene3D" id="3.30.1360.120">
    <property type="entry name" value="Probable tRNA modification gtpase trme, domain 1"/>
    <property type="match status" value="1"/>
</dbReference>
<dbReference type="HAMAP" id="MF_00259">
    <property type="entry name" value="GcvT"/>
    <property type="match status" value="1"/>
</dbReference>
<dbReference type="InterPro" id="IPR006223">
    <property type="entry name" value="GCS_T"/>
</dbReference>
<dbReference type="InterPro" id="IPR022903">
    <property type="entry name" value="GCS_T_bac"/>
</dbReference>
<dbReference type="InterPro" id="IPR013977">
    <property type="entry name" value="GCST_C"/>
</dbReference>
<dbReference type="InterPro" id="IPR006222">
    <property type="entry name" value="GCV_T_N"/>
</dbReference>
<dbReference type="InterPro" id="IPR028896">
    <property type="entry name" value="GcvT/YgfZ/DmdA"/>
</dbReference>
<dbReference type="InterPro" id="IPR029043">
    <property type="entry name" value="GcvT/YgfZ_C"/>
</dbReference>
<dbReference type="InterPro" id="IPR027266">
    <property type="entry name" value="TrmE/GcvT_dom1"/>
</dbReference>
<dbReference type="NCBIfam" id="TIGR00528">
    <property type="entry name" value="gcvT"/>
    <property type="match status" value="1"/>
</dbReference>
<dbReference type="NCBIfam" id="NF001567">
    <property type="entry name" value="PRK00389.1"/>
    <property type="match status" value="1"/>
</dbReference>
<dbReference type="PANTHER" id="PTHR43757">
    <property type="entry name" value="AMINOMETHYLTRANSFERASE"/>
    <property type="match status" value="1"/>
</dbReference>
<dbReference type="PANTHER" id="PTHR43757:SF2">
    <property type="entry name" value="AMINOMETHYLTRANSFERASE, MITOCHONDRIAL"/>
    <property type="match status" value="1"/>
</dbReference>
<dbReference type="Pfam" id="PF01571">
    <property type="entry name" value="GCV_T"/>
    <property type="match status" value="1"/>
</dbReference>
<dbReference type="Pfam" id="PF08669">
    <property type="entry name" value="GCV_T_C"/>
    <property type="match status" value="1"/>
</dbReference>
<dbReference type="PIRSF" id="PIRSF006487">
    <property type="entry name" value="GcvT"/>
    <property type="match status" value="1"/>
</dbReference>
<dbReference type="SUPFAM" id="SSF101790">
    <property type="entry name" value="Aminomethyltransferase beta-barrel domain"/>
    <property type="match status" value="1"/>
</dbReference>
<dbReference type="SUPFAM" id="SSF103025">
    <property type="entry name" value="Folate-binding domain"/>
    <property type="match status" value="1"/>
</dbReference>
<feature type="chain" id="PRO_1000047714" description="Aminomethyltransferase">
    <location>
        <begin position="1"/>
        <end position="363"/>
    </location>
</feature>
<name>GCST_STAA3</name>
<organism>
    <name type="scientific">Staphylococcus aureus (strain USA300)</name>
    <dbReference type="NCBI Taxonomy" id="367830"/>
    <lineage>
        <taxon>Bacteria</taxon>
        <taxon>Bacillati</taxon>
        <taxon>Bacillota</taxon>
        <taxon>Bacilli</taxon>
        <taxon>Bacillales</taxon>
        <taxon>Staphylococcaceae</taxon>
        <taxon>Staphylococcus</taxon>
    </lineage>
</organism>
<comment type="function">
    <text evidence="1">The glycine cleavage system catalyzes the degradation of glycine.</text>
</comment>
<comment type="catalytic activity">
    <reaction evidence="1">
        <text>N(6)-[(R)-S(8)-aminomethyldihydrolipoyl]-L-lysyl-[protein] + (6S)-5,6,7,8-tetrahydrofolate = N(6)-[(R)-dihydrolipoyl]-L-lysyl-[protein] + (6R)-5,10-methylene-5,6,7,8-tetrahydrofolate + NH4(+)</text>
        <dbReference type="Rhea" id="RHEA:16945"/>
        <dbReference type="Rhea" id="RHEA-COMP:10475"/>
        <dbReference type="Rhea" id="RHEA-COMP:10492"/>
        <dbReference type="ChEBI" id="CHEBI:15636"/>
        <dbReference type="ChEBI" id="CHEBI:28938"/>
        <dbReference type="ChEBI" id="CHEBI:57453"/>
        <dbReference type="ChEBI" id="CHEBI:83100"/>
        <dbReference type="ChEBI" id="CHEBI:83143"/>
        <dbReference type="EC" id="2.1.2.10"/>
    </reaction>
</comment>
<comment type="subunit">
    <text evidence="1">The glycine cleavage system is composed of four proteins: P, T, L and H.</text>
</comment>
<comment type="similarity">
    <text evidence="1">Belongs to the GcvT family.</text>
</comment>
<protein>
    <recommendedName>
        <fullName evidence="1">Aminomethyltransferase</fullName>
        <ecNumber evidence="1">2.1.2.10</ecNumber>
    </recommendedName>
    <alternativeName>
        <fullName evidence="1">Glycine cleavage system T protein</fullName>
    </alternativeName>
</protein>
<reference key="1">
    <citation type="journal article" date="2006" name="Lancet">
        <title>Complete genome sequence of USA300, an epidemic clone of community-acquired meticillin-resistant Staphylococcus aureus.</title>
        <authorList>
            <person name="Diep B.A."/>
            <person name="Gill S.R."/>
            <person name="Chang R.F."/>
            <person name="Phan T.H."/>
            <person name="Chen J.H."/>
            <person name="Davidson M.G."/>
            <person name="Lin F."/>
            <person name="Lin J."/>
            <person name="Carleton H.A."/>
            <person name="Mongodin E.F."/>
            <person name="Sensabaugh G.F."/>
            <person name="Perdreau-Remington F."/>
        </authorList>
    </citation>
    <scope>NUCLEOTIDE SEQUENCE [LARGE SCALE GENOMIC DNA]</scope>
    <source>
        <strain>USA300</strain>
    </source>
</reference>
<keyword id="KW-0032">Aminotransferase</keyword>
<keyword id="KW-0808">Transferase</keyword>
<accession>Q2FGI5</accession>
<proteinExistence type="inferred from homology"/>